<name>LEPA_SALHS</name>
<accession>B4TE17</accession>
<evidence type="ECO:0000255" key="1">
    <source>
        <dbReference type="HAMAP-Rule" id="MF_00071"/>
    </source>
</evidence>
<reference key="1">
    <citation type="journal article" date="2011" name="J. Bacteriol.">
        <title>Comparative genomics of 28 Salmonella enterica isolates: evidence for CRISPR-mediated adaptive sublineage evolution.</title>
        <authorList>
            <person name="Fricke W.F."/>
            <person name="Mammel M.K."/>
            <person name="McDermott P.F."/>
            <person name="Tartera C."/>
            <person name="White D.G."/>
            <person name="Leclerc J.E."/>
            <person name="Ravel J."/>
            <person name="Cebula T.A."/>
        </authorList>
    </citation>
    <scope>NUCLEOTIDE SEQUENCE [LARGE SCALE GENOMIC DNA]</scope>
    <source>
        <strain>SL476</strain>
    </source>
</reference>
<keyword id="KW-0997">Cell inner membrane</keyword>
<keyword id="KW-1003">Cell membrane</keyword>
<keyword id="KW-0342">GTP-binding</keyword>
<keyword id="KW-0378">Hydrolase</keyword>
<keyword id="KW-0472">Membrane</keyword>
<keyword id="KW-0547">Nucleotide-binding</keyword>
<keyword id="KW-0648">Protein biosynthesis</keyword>
<dbReference type="EC" id="3.6.5.n1" evidence="1"/>
<dbReference type="EMBL" id="CP001120">
    <property type="protein sequence ID" value="ACF67364.1"/>
    <property type="molecule type" value="Genomic_DNA"/>
</dbReference>
<dbReference type="RefSeq" id="WP_000790154.1">
    <property type="nucleotide sequence ID" value="NC_011083.1"/>
</dbReference>
<dbReference type="SMR" id="B4TE17"/>
<dbReference type="KEGG" id="seh:SeHA_C2850"/>
<dbReference type="HOGENOM" id="CLU_009995_3_3_6"/>
<dbReference type="Proteomes" id="UP000001866">
    <property type="component" value="Chromosome"/>
</dbReference>
<dbReference type="GO" id="GO:0005886">
    <property type="term" value="C:plasma membrane"/>
    <property type="evidence" value="ECO:0007669"/>
    <property type="project" value="UniProtKB-SubCell"/>
</dbReference>
<dbReference type="GO" id="GO:0005525">
    <property type="term" value="F:GTP binding"/>
    <property type="evidence" value="ECO:0007669"/>
    <property type="project" value="UniProtKB-UniRule"/>
</dbReference>
<dbReference type="GO" id="GO:0003924">
    <property type="term" value="F:GTPase activity"/>
    <property type="evidence" value="ECO:0007669"/>
    <property type="project" value="UniProtKB-UniRule"/>
</dbReference>
<dbReference type="GO" id="GO:0097216">
    <property type="term" value="F:guanosine tetraphosphate binding"/>
    <property type="evidence" value="ECO:0007669"/>
    <property type="project" value="UniProtKB-ARBA"/>
</dbReference>
<dbReference type="GO" id="GO:0043022">
    <property type="term" value="F:ribosome binding"/>
    <property type="evidence" value="ECO:0007669"/>
    <property type="project" value="UniProtKB-UniRule"/>
</dbReference>
<dbReference type="GO" id="GO:0003746">
    <property type="term" value="F:translation elongation factor activity"/>
    <property type="evidence" value="ECO:0007669"/>
    <property type="project" value="UniProtKB-UniRule"/>
</dbReference>
<dbReference type="GO" id="GO:0045727">
    <property type="term" value="P:positive regulation of translation"/>
    <property type="evidence" value="ECO:0007669"/>
    <property type="project" value="UniProtKB-UniRule"/>
</dbReference>
<dbReference type="CDD" id="cd03699">
    <property type="entry name" value="EF4_II"/>
    <property type="match status" value="1"/>
</dbReference>
<dbReference type="CDD" id="cd16260">
    <property type="entry name" value="EF4_III"/>
    <property type="match status" value="1"/>
</dbReference>
<dbReference type="CDD" id="cd01890">
    <property type="entry name" value="LepA"/>
    <property type="match status" value="1"/>
</dbReference>
<dbReference type="CDD" id="cd03709">
    <property type="entry name" value="lepA_C"/>
    <property type="match status" value="1"/>
</dbReference>
<dbReference type="FunFam" id="3.30.70.240:FF:000005">
    <property type="entry name" value="Elongation factor 4"/>
    <property type="match status" value="1"/>
</dbReference>
<dbReference type="FunFam" id="3.40.50.300:FF:000078">
    <property type="entry name" value="Elongation factor 4"/>
    <property type="match status" value="1"/>
</dbReference>
<dbReference type="FunFam" id="2.40.30.10:FF:000015">
    <property type="entry name" value="Translation factor GUF1, mitochondrial"/>
    <property type="match status" value="1"/>
</dbReference>
<dbReference type="FunFam" id="3.30.70.2570:FF:000001">
    <property type="entry name" value="Translation factor GUF1, mitochondrial"/>
    <property type="match status" value="1"/>
</dbReference>
<dbReference type="FunFam" id="3.30.70.870:FF:000004">
    <property type="entry name" value="Translation factor GUF1, mitochondrial"/>
    <property type="match status" value="1"/>
</dbReference>
<dbReference type="Gene3D" id="3.30.70.240">
    <property type="match status" value="1"/>
</dbReference>
<dbReference type="Gene3D" id="3.30.70.2570">
    <property type="entry name" value="Elongation factor 4, C-terminal domain"/>
    <property type="match status" value="1"/>
</dbReference>
<dbReference type="Gene3D" id="3.30.70.870">
    <property type="entry name" value="Elongation Factor G (Translational Gtpase), domain 3"/>
    <property type="match status" value="1"/>
</dbReference>
<dbReference type="Gene3D" id="3.40.50.300">
    <property type="entry name" value="P-loop containing nucleotide triphosphate hydrolases"/>
    <property type="match status" value="1"/>
</dbReference>
<dbReference type="Gene3D" id="2.40.30.10">
    <property type="entry name" value="Translation factors"/>
    <property type="match status" value="1"/>
</dbReference>
<dbReference type="HAMAP" id="MF_00071">
    <property type="entry name" value="LepA"/>
    <property type="match status" value="1"/>
</dbReference>
<dbReference type="InterPro" id="IPR006297">
    <property type="entry name" value="EF-4"/>
</dbReference>
<dbReference type="InterPro" id="IPR035647">
    <property type="entry name" value="EFG_III/V"/>
</dbReference>
<dbReference type="InterPro" id="IPR000640">
    <property type="entry name" value="EFG_V-like"/>
</dbReference>
<dbReference type="InterPro" id="IPR004161">
    <property type="entry name" value="EFTu-like_2"/>
</dbReference>
<dbReference type="InterPro" id="IPR031157">
    <property type="entry name" value="G_TR_CS"/>
</dbReference>
<dbReference type="InterPro" id="IPR038363">
    <property type="entry name" value="LepA_C_sf"/>
</dbReference>
<dbReference type="InterPro" id="IPR013842">
    <property type="entry name" value="LepA_CTD"/>
</dbReference>
<dbReference type="InterPro" id="IPR035654">
    <property type="entry name" value="LepA_IV"/>
</dbReference>
<dbReference type="InterPro" id="IPR027417">
    <property type="entry name" value="P-loop_NTPase"/>
</dbReference>
<dbReference type="InterPro" id="IPR005225">
    <property type="entry name" value="Small_GTP-bd"/>
</dbReference>
<dbReference type="InterPro" id="IPR000795">
    <property type="entry name" value="T_Tr_GTP-bd_dom"/>
</dbReference>
<dbReference type="NCBIfam" id="TIGR01393">
    <property type="entry name" value="lepA"/>
    <property type="match status" value="1"/>
</dbReference>
<dbReference type="NCBIfam" id="TIGR00231">
    <property type="entry name" value="small_GTP"/>
    <property type="match status" value="1"/>
</dbReference>
<dbReference type="PANTHER" id="PTHR43512:SF4">
    <property type="entry name" value="TRANSLATION FACTOR GUF1 HOMOLOG, CHLOROPLASTIC"/>
    <property type="match status" value="1"/>
</dbReference>
<dbReference type="PANTHER" id="PTHR43512">
    <property type="entry name" value="TRANSLATION FACTOR GUF1-RELATED"/>
    <property type="match status" value="1"/>
</dbReference>
<dbReference type="Pfam" id="PF00679">
    <property type="entry name" value="EFG_C"/>
    <property type="match status" value="1"/>
</dbReference>
<dbReference type="Pfam" id="PF00009">
    <property type="entry name" value="GTP_EFTU"/>
    <property type="match status" value="1"/>
</dbReference>
<dbReference type="Pfam" id="PF03144">
    <property type="entry name" value="GTP_EFTU_D2"/>
    <property type="match status" value="1"/>
</dbReference>
<dbReference type="Pfam" id="PF06421">
    <property type="entry name" value="LepA_C"/>
    <property type="match status" value="1"/>
</dbReference>
<dbReference type="PRINTS" id="PR00315">
    <property type="entry name" value="ELONGATNFCT"/>
</dbReference>
<dbReference type="SUPFAM" id="SSF54980">
    <property type="entry name" value="EF-G C-terminal domain-like"/>
    <property type="match status" value="2"/>
</dbReference>
<dbReference type="SUPFAM" id="SSF52540">
    <property type="entry name" value="P-loop containing nucleoside triphosphate hydrolases"/>
    <property type="match status" value="1"/>
</dbReference>
<dbReference type="PROSITE" id="PS00301">
    <property type="entry name" value="G_TR_1"/>
    <property type="match status" value="1"/>
</dbReference>
<dbReference type="PROSITE" id="PS51722">
    <property type="entry name" value="G_TR_2"/>
    <property type="match status" value="1"/>
</dbReference>
<protein>
    <recommendedName>
        <fullName evidence="1">Elongation factor 4</fullName>
        <shortName evidence="1">EF-4</shortName>
        <ecNumber evidence="1">3.6.5.n1</ecNumber>
    </recommendedName>
    <alternativeName>
        <fullName evidence="1">Ribosomal back-translocase LepA</fullName>
    </alternativeName>
</protein>
<sequence>MKNIRNFSIIAHIDHGKSTLSDRIIQICGGLSDREMEAQVLDSMDLERERGITIKAQSVTLDFKASDGETYQLNFIDTPGHVDFSYEVSRSLAACEGALLVVDAGQGVEAQTLANCYTAMEMDLEVVPVLNKIDLPAADPERVAEEIEDIVGIDATDAVRCSAKTGVGVTDVLERLVRDIPPPQGDPDGPLQALIIDSWFDNYLGVVSLVRIKNGTMRKGDKIKVMSTGQTYNADRLGIFTPKQVDRTELKCGEVGWLVCAIKDILGAPVGDTLTSARNPAEKALPGFKKVKPQVYAGLFPVSSDDYESFRDALGKLSLNDASLFYEPESSSALGFGFRCGFLGLLHMEIIQERLEREYDLDLITTAPTVVYEVETTAKETIYVDSPSKLPPLNNIYELREPIAECHMLLPQAYLGNVITLCIEKRGVQTNMVYHGNQVALTYEIPMAEVVLDFFDRLKSTSRGYASLDYNFKRFQASDMVRVDVLINNERVDALALITHRDNSQSRGRELVEKMKDLIPRQQFDIAIQAAIGTHIIARSTVKQLRKNVLAKCYGGDISRKKKLLQKQKEGKKRMKQIGNVELPQEAFLAILHVGKDNK</sequence>
<feature type="chain" id="PRO_1000092442" description="Elongation factor 4">
    <location>
        <begin position="1"/>
        <end position="599"/>
    </location>
</feature>
<feature type="domain" description="tr-type G">
    <location>
        <begin position="2"/>
        <end position="184"/>
    </location>
</feature>
<feature type="binding site" evidence="1">
    <location>
        <begin position="14"/>
        <end position="19"/>
    </location>
    <ligand>
        <name>GTP</name>
        <dbReference type="ChEBI" id="CHEBI:37565"/>
    </ligand>
</feature>
<feature type="binding site" evidence="1">
    <location>
        <begin position="131"/>
        <end position="134"/>
    </location>
    <ligand>
        <name>GTP</name>
        <dbReference type="ChEBI" id="CHEBI:37565"/>
    </ligand>
</feature>
<proteinExistence type="inferred from homology"/>
<organism>
    <name type="scientific">Salmonella heidelberg (strain SL476)</name>
    <dbReference type="NCBI Taxonomy" id="454169"/>
    <lineage>
        <taxon>Bacteria</taxon>
        <taxon>Pseudomonadati</taxon>
        <taxon>Pseudomonadota</taxon>
        <taxon>Gammaproteobacteria</taxon>
        <taxon>Enterobacterales</taxon>
        <taxon>Enterobacteriaceae</taxon>
        <taxon>Salmonella</taxon>
    </lineage>
</organism>
<comment type="function">
    <text evidence="1">Required for accurate and efficient protein synthesis under certain stress conditions. May act as a fidelity factor of the translation reaction, by catalyzing a one-codon backward translocation of tRNAs on improperly translocated ribosomes. Back-translocation proceeds from a post-translocation (POST) complex to a pre-translocation (PRE) complex, thus giving elongation factor G a second chance to translocate the tRNAs correctly. Binds to ribosomes in a GTP-dependent manner.</text>
</comment>
<comment type="catalytic activity">
    <reaction evidence="1">
        <text>GTP + H2O = GDP + phosphate + H(+)</text>
        <dbReference type="Rhea" id="RHEA:19669"/>
        <dbReference type="ChEBI" id="CHEBI:15377"/>
        <dbReference type="ChEBI" id="CHEBI:15378"/>
        <dbReference type="ChEBI" id="CHEBI:37565"/>
        <dbReference type="ChEBI" id="CHEBI:43474"/>
        <dbReference type="ChEBI" id="CHEBI:58189"/>
        <dbReference type="EC" id="3.6.5.n1"/>
    </reaction>
</comment>
<comment type="subcellular location">
    <subcellularLocation>
        <location evidence="1">Cell inner membrane</location>
        <topology evidence="1">Peripheral membrane protein</topology>
        <orientation evidence="1">Cytoplasmic side</orientation>
    </subcellularLocation>
</comment>
<comment type="similarity">
    <text evidence="1">Belongs to the TRAFAC class translation factor GTPase superfamily. Classic translation factor GTPase family. LepA subfamily.</text>
</comment>
<gene>
    <name evidence="1" type="primary">lepA</name>
    <name type="ordered locus">SeHA_C2850</name>
</gene>